<dbReference type="EC" id="2.8.1.14" evidence="2"/>
<dbReference type="EMBL" id="AE014298">
    <property type="protein sequence ID" value="AAF45578.3"/>
    <property type="molecule type" value="Genomic_DNA"/>
</dbReference>
<dbReference type="EMBL" id="AY051773">
    <property type="protein sequence ID" value="AAK93197.1"/>
    <property type="molecule type" value="mRNA"/>
</dbReference>
<dbReference type="RefSeq" id="NP_652639.1">
    <property type="nucleotide sequence ID" value="NM_144382.4"/>
</dbReference>
<dbReference type="SMR" id="Q9W5B6"/>
<dbReference type="BioGRID" id="72783">
    <property type="interactions" value="10"/>
</dbReference>
<dbReference type="FunCoup" id="Q9W5B6">
    <property type="interactions" value="1636"/>
</dbReference>
<dbReference type="STRING" id="7227.FBpp0070168"/>
<dbReference type="GlyGen" id="Q9W5B6">
    <property type="glycosylation" value="1 site"/>
</dbReference>
<dbReference type="PaxDb" id="7227-FBpp0070168"/>
<dbReference type="DNASU" id="53546"/>
<dbReference type="EnsemblMetazoa" id="FBtr0070173">
    <property type="protein sequence ID" value="FBpp0070168"/>
    <property type="gene ID" value="FBgn0040337"/>
</dbReference>
<dbReference type="GeneID" id="53546"/>
<dbReference type="KEGG" id="dme:Dmel_CG3021"/>
<dbReference type="UCSC" id="CG3021-RA">
    <property type="organism name" value="d. melanogaster"/>
</dbReference>
<dbReference type="AGR" id="FB:FBgn0040337"/>
<dbReference type="FlyBase" id="FBgn0040337">
    <property type="gene designation" value="CG3021"/>
</dbReference>
<dbReference type="VEuPathDB" id="VectorBase:FBgn0040337"/>
<dbReference type="eggNOG" id="KOG2805">
    <property type="taxonomic scope" value="Eukaryota"/>
</dbReference>
<dbReference type="GeneTree" id="ENSGT00390000014323"/>
<dbReference type="HOGENOM" id="CLU_035188_1_1_1"/>
<dbReference type="InParanoid" id="Q9W5B6"/>
<dbReference type="OMA" id="PFYVWDL"/>
<dbReference type="OrthoDB" id="3685at2759"/>
<dbReference type="PhylomeDB" id="Q9W5B6"/>
<dbReference type="BioGRID-ORCS" id="53546">
    <property type="hits" value="0 hits in 1 CRISPR screen"/>
</dbReference>
<dbReference type="GenomeRNAi" id="53546"/>
<dbReference type="PRO" id="PR:Q9W5B6"/>
<dbReference type="Proteomes" id="UP000000803">
    <property type="component" value="Chromosome X"/>
</dbReference>
<dbReference type="Bgee" id="FBgn0040337">
    <property type="expression patterns" value="Expressed in spermathecum and 63 other cell types or tissues"/>
</dbReference>
<dbReference type="ExpressionAtlas" id="Q9W5B6">
    <property type="expression patterns" value="baseline and differential"/>
</dbReference>
<dbReference type="GO" id="GO:0005739">
    <property type="term" value="C:mitochondrion"/>
    <property type="evidence" value="ECO:0000318"/>
    <property type="project" value="GO_Central"/>
</dbReference>
<dbReference type="GO" id="GO:0005524">
    <property type="term" value="F:ATP binding"/>
    <property type="evidence" value="ECO:0007669"/>
    <property type="project" value="UniProtKB-KW"/>
</dbReference>
<dbReference type="GO" id="GO:0000049">
    <property type="term" value="F:tRNA binding"/>
    <property type="evidence" value="ECO:0007669"/>
    <property type="project" value="UniProtKB-KW"/>
</dbReference>
<dbReference type="GO" id="GO:0061708">
    <property type="term" value="F:tRNA-5-taurinomethyluridine 2-sulfurtransferase"/>
    <property type="evidence" value="ECO:0000250"/>
    <property type="project" value="FlyBase"/>
</dbReference>
<dbReference type="GO" id="GO:0002143">
    <property type="term" value="P:tRNA wobble position uridine thiolation"/>
    <property type="evidence" value="ECO:0000318"/>
    <property type="project" value="GO_Central"/>
</dbReference>
<dbReference type="CDD" id="cd01998">
    <property type="entry name" value="MnmA_TRMU-like"/>
    <property type="match status" value="1"/>
</dbReference>
<dbReference type="FunFam" id="3.40.50.620:FF:000104">
    <property type="entry name" value="Mitochondrial tRNA-specific 2-thiouridylase 1"/>
    <property type="match status" value="1"/>
</dbReference>
<dbReference type="FunFam" id="2.40.30.10:FF:000222">
    <property type="entry name" value="tRNA-specific 2-thiouridylase"/>
    <property type="match status" value="1"/>
</dbReference>
<dbReference type="FunFam" id="2.30.30.280:FF:000001">
    <property type="entry name" value="tRNA-specific 2-thiouridylase MnmA"/>
    <property type="match status" value="1"/>
</dbReference>
<dbReference type="Gene3D" id="2.30.30.280">
    <property type="entry name" value="Adenine nucleotide alpha hydrolases-like domains"/>
    <property type="match status" value="1"/>
</dbReference>
<dbReference type="Gene3D" id="3.40.50.620">
    <property type="entry name" value="HUPs"/>
    <property type="match status" value="1"/>
</dbReference>
<dbReference type="Gene3D" id="2.40.30.10">
    <property type="entry name" value="Translation factors"/>
    <property type="match status" value="1"/>
</dbReference>
<dbReference type="HAMAP" id="MF_00144">
    <property type="entry name" value="tRNA_thiouridyl_MnmA"/>
    <property type="match status" value="1"/>
</dbReference>
<dbReference type="InterPro" id="IPR004506">
    <property type="entry name" value="MnmA-like"/>
</dbReference>
<dbReference type="InterPro" id="IPR046885">
    <property type="entry name" value="MnmA-like_C"/>
</dbReference>
<dbReference type="InterPro" id="IPR046884">
    <property type="entry name" value="MnmA-like_central"/>
</dbReference>
<dbReference type="InterPro" id="IPR023382">
    <property type="entry name" value="MnmA-like_central_sf"/>
</dbReference>
<dbReference type="InterPro" id="IPR014729">
    <property type="entry name" value="Rossmann-like_a/b/a_fold"/>
</dbReference>
<dbReference type="NCBIfam" id="NF001138">
    <property type="entry name" value="PRK00143.1"/>
    <property type="match status" value="1"/>
</dbReference>
<dbReference type="NCBIfam" id="TIGR00420">
    <property type="entry name" value="trmU"/>
    <property type="match status" value="1"/>
</dbReference>
<dbReference type="PANTHER" id="PTHR11933:SF5">
    <property type="entry name" value="MITOCHONDRIAL TRNA-SPECIFIC 2-THIOURIDYLASE 1"/>
    <property type="match status" value="1"/>
</dbReference>
<dbReference type="PANTHER" id="PTHR11933">
    <property type="entry name" value="TRNA 5-METHYLAMINOMETHYL-2-THIOURIDYLATE -METHYLTRANSFERASE"/>
    <property type="match status" value="1"/>
</dbReference>
<dbReference type="Pfam" id="PF03054">
    <property type="entry name" value="tRNA_Me_trans"/>
    <property type="match status" value="1"/>
</dbReference>
<dbReference type="Pfam" id="PF20258">
    <property type="entry name" value="tRNA_Me_trans_C"/>
    <property type="match status" value="1"/>
</dbReference>
<dbReference type="Pfam" id="PF20259">
    <property type="entry name" value="tRNA_Me_trans_M"/>
    <property type="match status" value="1"/>
</dbReference>
<dbReference type="SUPFAM" id="SSF52402">
    <property type="entry name" value="Adenine nucleotide alpha hydrolases-like"/>
    <property type="match status" value="1"/>
</dbReference>
<organism>
    <name type="scientific">Drosophila melanogaster</name>
    <name type="common">Fruit fly</name>
    <dbReference type="NCBI Taxonomy" id="7227"/>
    <lineage>
        <taxon>Eukaryota</taxon>
        <taxon>Metazoa</taxon>
        <taxon>Ecdysozoa</taxon>
        <taxon>Arthropoda</taxon>
        <taxon>Hexapoda</taxon>
        <taxon>Insecta</taxon>
        <taxon>Pterygota</taxon>
        <taxon>Neoptera</taxon>
        <taxon>Endopterygota</taxon>
        <taxon>Diptera</taxon>
        <taxon>Brachycera</taxon>
        <taxon>Muscomorpha</taxon>
        <taxon>Ephydroidea</taxon>
        <taxon>Drosophilidae</taxon>
        <taxon>Drosophila</taxon>
        <taxon>Sophophora</taxon>
    </lineage>
</organism>
<accession>Q9W5B6</accession>
<accession>Q960Y5</accession>
<comment type="function">
    <text evidence="2">Catalyzes the 2-thiolation of uridine at the wobble position (U34) of mitochondrial tRNA(Lys), tRNA(Glu) and tRNA(Gln). Required for the formation of 5-taurinomethyl-2-thiouridine (tm5s2U) of mitochondrial tRNA(Lys), tRNA(Glu), and tRNA(Gln) at the wobble position. ATP is required to activate the C2 atom of the wobble base.</text>
</comment>
<comment type="catalytic activity">
    <reaction evidence="2">
        <text>5-taurinomethyluridine(34) in tRNA + S-sulfanyl-L-cysteinyl-[protein] + AH2 + ATP = 5-taurinomethyl-2-thiouridine(34) in tRNA + L-cysteinyl-[protein] + A + AMP + diphosphate + H(+)</text>
        <dbReference type="Rhea" id="RHEA:47040"/>
        <dbReference type="Rhea" id="RHEA-COMP:10131"/>
        <dbReference type="Rhea" id="RHEA-COMP:11726"/>
        <dbReference type="Rhea" id="RHEA-COMP:11732"/>
        <dbReference type="Rhea" id="RHEA-COMP:11733"/>
        <dbReference type="ChEBI" id="CHEBI:13193"/>
        <dbReference type="ChEBI" id="CHEBI:15378"/>
        <dbReference type="ChEBI" id="CHEBI:17499"/>
        <dbReference type="ChEBI" id="CHEBI:29950"/>
        <dbReference type="ChEBI" id="CHEBI:30616"/>
        <dbReference type="ChEBI" id="CHEBI:33019"/>
        <dbReference type="ChEBI" id="CHEBI:61963"/>
        <dbReference type="ChEBI" id="CHEBI:87171"/>
        <dbReference type="ChEBI" id="CHEBI:87172"/>
        <dbReference type="ChEBI" id="CHEBI:456215"/>
        <dbReference type="EC" id="2.8.1.14"/>
    </reaction>
</comment>
<comment type="subcellular location">
    <subcellularLocation>
        <location evidence="1">Mitochondrion</location>
    </subcellularLocation>
</comment>
<comment type="miscellaneous">
    <text evidence="1">During the reaction, ATP is used to activate the C2 atom of U34 by adenylation. After this, the persulfide sulfur on the catalytic cysteine is transferred to the C2 atom of the wobble base (U34) of mitochondrial tRNA(Lys), tRNA(Glu) and tRNA(Gln). The reaction probably involves hydrogen sulfide that is generated from the persulfide intermediate and that acts as a nucleophile towards the activated C2 atom on U34. Subsequently, a transient disulfide bond is formed between the two active site cysteine residues (By similarity).</text>
</comment>
<comment type="similarity">
    <text evidence="3">Belongs to the MnmA/TRMU family.</text>
</comment>
<proteinExistence type="evidence at transcript level"/>
<protein>
    <recommendedName>
        <fullName>Mitochondrial tRNA-specific 2-thiouridylase 1</fullName>
        <ecNumber evidence="2">2.8.1.14</ecNumber>
    </recommendedName>
</protein>
<sequence length="389" mass="43350">MIRNVVVGVSGGVDSAVSAHLLAEQGFKVLGVFMRNWDEADEVGRCSGEADLKDAEWACRQLGVELRQVNYVREYWTAVFSQFLDDYQMGLTPNPDILCNRHIKFDLFHKHALENLGYDAVATGHYARNSLGNYLEGIASNNDARLLIPADTFKDQTFFLAGISRKALQRTMFPLGDFQKSQVKDLAKKIGFQRLAKKKESTGICFVGKRNFKDFIQEYITSKRGPFLDIDSGAVVGHHEGIHQWTVGQRCRLSSFLQPYFVARKEAASNTIYVASGHNHPALLSTHIAVDPPNWLCSKSQQILSDTGSLRCRFRFQHTKPLVDCQLSISPSNTFLVELDAPLRAITPGQYAVFYDDTACLGSARILSANPLKKKNAQTQQAQAANLVS</sequence>
<feature type="chain" id="PRO_0000349875" description="Mitochondrial tRNA-specific 2-thiouridylase 1">
    <location>
        <begin position="1"/>
        <end position="389"/>
    </location>
</feature>
<feature type="region of interest" description="Interaction with target base in tRNA" evidence="1">
    <location>
        <begin position="94"/>
        <end position="96"/>
    </location>
</feature>
<feature type="region of interest" description="Interaction with tRNA" evidence="1">
    <location>
        <begin position="154"/>
        <end position="156"/>
    </location>
</feature>
<feature type="region of interest" description="Interaction with tRNA" evidence="1">
    <location>
        <begin position="317"/>
        <end position="318"/>
    </location>
</feature>
<feature type="active site" description="Nucleophile" evidence="1">
    <location>
        <position position="99"/>
    </location>
</feature>
<feature type="active site" description="Cysteine persulfide intermediate" evidence="1">
    <location>
        <position position="205"/>
    </location>
</feature>
<feature type="binding site" evidence="1">
    <location>
        <begin position="8"/>
        <end position="15"/>
    </location>
    <ligand>
        <name>ATP</name>
        <dbReference type="ChEBI" id="CHEBI:30616"/>
    </ligand>
</feature>
<feature type="binding site" evidence="1">
    <location>
        <position position="34"/>
    </location>
    <ligand>
        <name>ATP</name>
        <dbReference type="ChEBI" id="CHEBI:30616"/>
    </ligand>
</feature>
<feature type="binding site" evidence="1">
    <location>
        <position position="124"/>
    </location>
    <ligand>
        <name>ATP</name>
        <dbReference type="ChEBI" id="CHEBI:30616"/>
    </ligand>
</feature>
<feature type="site" description="Interaction with tRNA" evidence="1">
    <location>
        <position position="125"/>
    </location>
</feature>
<feature type="site" description="Interaction with tRNA" evidence="1">
    <location>
        <position position="250"/>
    </location>
</feature>
<feature type="site" description="Interaction with tRNA" evidence="1">
    <location>
        <position position="350"/>
    </location>
</feature>
<feature type="disulfide bond" description="Alternate" evidence="1">
    <location>
        <begin position="99"/>
        <end position="205"/>
    </location>
</feature>
<reference key="1">
    <citation type="journal article" date="2000" name="Science">
        <title>The genome sequence of Drosophila melanogaster.</title>
        <authorList>
            <person name="Adams M.D."/>
            <person name="Celniker S.E."/>
            <person name="Holt R.A."/>
            <person name="Evans C.A."/>
            <person name="Gocayne J.D."/>
            <person name="Amanatides P.G."/>
            <person name="Scherer S.E."/>
            <person name="Li P.W."/>
            <person name="Hoskins R.A."/>
            <person name="Galle R.F."/>
            <person name="George R.A."/>
            <person name="Lewis S.E."/>
            <person name="Richards S."/>
            <person name="Ashburner M."/>
            <person name="Henderson S.N."/>
            <person name="Sutton G.G."/>
            <person name="Wortman J.R."/>
            <person name="Yandell M.D."/>
            <person name="Zhang Q."/>
            <person name="Chen L.X."/>
            <person name="Brandon R.C."/>
            <person name="Rogers Y.-H.C."/>
            <person name="Blazej R.G."/>
            <person name="Champe M."/>
            <person name="Pfeiffer B.D."/>
            <person name="Wan K.H."/>
            <person name="Doyle C."/>
            <person name="Baxter E.G."/>
            <person name="Helt G."/>
            <person name="Nelson C.R."/>
            <person name="Miklos G.L.G."/>
            <person name="Abril J.F."/>
            <person name="Agbayani A."/>
            <person name="An H.-J."/>
            <person name="Andrews-Pfannkoch C."/>
            <person name="Baldwin D."/>
            <person name="Ballew R.M."/>
            <person name="Basu A."/>
            <person name="Baxendale J."/>
            <person name="Bayraktaroglu L."/>
            <person name="Beasley E.M."/>
            <person name="Beeson K.Y."/>
            <person name="Benos P.V."/>
            <person name="Berman B.P."/>
            <person name="Bhandari D."/>
            <person name="Bolshakov S."/>
            <person name="Borkova D."/>
            <person name="Botchan M.R."/>
            <person name="Bouck J."/>
            <person name="Brokstein P."/>
            <person name="Brottier P."/>
            <person name="Burtis K.C."/>
            <person name="Busam D.A."/>
            <person name="Butler H."/>
            <person name="Cadieu E."/>
            <person name="Center A."/>
            <person name="Chandra I."/>
            <person name="Cherry J.M."/>
            <person name="Cawley S."/>
            <person name="Dahlke C."/>
            <person name="Davenport L.B."/>
            <person name="Davies P."/>
            <person name="de Pablos B."/>
            <person name="Delcher A."/>
            <person name="Deng Z."/>
            <person name="Mays A.D."/>
            <person name="Dew I."/>
            <person name="Dietz S.M."/>
            <person name="Dodson K."/>
            <person name="Doup L.E."/>
            <person name="Downes M."/>
            <person name="Dugan-Rocha S."/>
            <person name="Dunkov B.C."/>
            <person name="Dunn P."/>
            <person name="Durbin K.J."/>
            <person name="Evangelista C.C."/>
            <person name="Ferraz C."/>
            <person name="Ferriera S."/>
            <person name="Fleischmann W."/>
            <person name="Fosler C."/>
            <person name="Gabrielian A.E."/>
            <person name="Garg N.S."/>
            <person name="Gelbart W.M."/>
            <person name="Glasser K."/>
            <person name="Glodek A."/>
            <person name="Gong F."/>
            <person name="Gorrell J.H."/>
            <person name="Gu Z."/>
            <person name="Guan P."/>
            <person name="Harris M."/>
            <person name="Harris N.L."/>
            <person name="Harvey D.A."/>
            <person name="Heiman T.J."/>
            <person name="Hernandez J.R."/>
            <person name="Houck J."/>
            <person name="Hostin D."/>
            <person name="Houston K.A."/>
            <person name="Howland T.J."/>
            <person name="Wei M.-H."/>
            <person name="Ibegwam C."/>
            <person name="Jalali M."/>
            <person name="Kalush F."/>
            <person name="Karpen G.H."/>
            <person name="Ke Z."/>
            <person name="Kennison J.A."/>
            <person name="Ketchum K.A."/>
            <person name="Kimmel B.E."/>
            <person name="Kodira C.D."/>
            <person name="Kraft C.L."/>
            <person name="Kravitz S."/>
            <person name="Kulp D."/>
            <person name="Lai Z."/>
            <person name="Lasko P."/>
            <person name="Lei Y."/>
            <person name="Levitsky A.A."/>
            <person name="Li J.H."/>
            <person name="Li Z."/>
            <person name="Liang Y."/>
            <person name="Lin X."/>
            <person name="Liu X."/>
            <person name="Mattei B."/>
            <person name="McIntosh T.C."/>
            <person name="McLeod M.P."/>
            <person name="McPherson D."/>
            <person name="Merkulov G."/>
            <person name="Milshina N.V."/>
            <person name="Mobarry C."/>
            <person name="Morris J."/>
            <person name="Moshrefi A."/>
            <person name="Mount S.M."/>
            <person name="Moy M."/>
            <person name="Murphy B."/>
            <person name="Murphy L."/>
            <person name="Muzny D.M."/>
            <person name="Nelson D.L."/>
            <person name="Nelson D.R."/>
            <person name="Nelson K.A."/>
            <person name="Nixon K."/>
            <person name="Nusskern D.R."/>
            <person name="Pacleb J.M."/>
            <person name="Palazzolo M."/>
            <person name="Pittman G.S."/>
            <person name="Pan S."/>
            <person name="Pollard J."/>
            <person name="Puri V."/>
            <person name="Reese M.G."/>
            <person name="Reinert K."/>
            <person name="Remington K."/>
            <person name="Saunders R.D.C."/>
            <person name="Scheeler F."/>
            <person name="Shen H."/>
            <person name="Shue B.C."/>
            <person name="Siden-Kiamos I."/>
            <person name="Simpson M."/>
            <person name="Skupski M.P."/>
            <person name="Smith T.J."/>
            <person name="Spier E."/>
            <person name="Spradling A.C."/>
            <person name="Stapleton M."/>
            <person name="Strong R."/>
            <person name="Sun E."/>
            <person name="Svirskas R."/>
            <person name="Tector C."/>
            <person name="Turner R."/>
            <person name="Venter E."/>
            <person name="Wang A.H."/>
            <person name="Wang X."/>
            <person name="Wang Z.-Y."/>
            <person name="Wassarman D.A."/>
            <person name="Weinstock G.M."/>
            <person name="Weissenbach J."/>
            <person name="Williams S.M."/>
            <person name="Woodage T."/>
            <person name="Worley K.C."/>
            <person name="Wu D."/>
            <person name="Yang S."/>
            <person name="Yao Q.A."/>
            <person name="Ye J."/>
            <person name="Yeh R.-F."/>
            <person name="Zaveri J.S."/>
            <person name="Zhan M."/>
            <person name="Zhang G."/>
            <person name="Zhao Q."/>
            <person name="Zheng L."/>
            <person name="Zheng X.H."/>
            <person name="Zhong F.N."/>
            <person name="Zhong W."/>
            <person name="Zhou X."/>
            <person name="Zhu S.C."/>
            <person name="Zhu X."/>
            <person name="Smith H.O."/>
            <person name="Gibbs R.A."/>
            <person name="Myers E.W."/>
            <person name="Rubin G.M."/>
            <person name="Venter J.C."/>
        </authorList>
    </citation>
    <scope>NUCLEOTIDE SEQUENCE [LARGE SCALE GENOMIC DNA]</scope>
    <source>
        <strain>Berkeley</strain>
    </source>
</reference>
<reference key="2">
    <citation type="journal article" date="2002" name="Genome Biol.">
        <title>Annotation of the Drosophila melanogaster euchromatic genome: a systematic review.</title>
        <authorList>
            <person name="Misra S."/>
            <person name="Crosby M.A."/>
            <person name="Mungall C.J."/>
            <person name="Matthews B.B."/>
            <person name="Campbell K.S."/>
            <person name="Hradecky P."/>
            <person name="Huang Y."/>
            <person name="Kaminker J.S."/>
            <person name="Millburn G.H."/>
            <person name="Prochnik S.E."/>
            <person name="Smith C.D."/>
            <person name="Tupy J.L."/>
            <person name="Whitfield E.J."/>
            <person name="Bayraktaroglu L."/>
            <person name="Berman B.P."/>
            <person name="Bettencourt B.R."/>
            <person name="Celniker S.E."/>
            <person name="de Grey A.D.N.J."/>
            <person name="Drysdale R.A."/>
            <person name="Harris N.L."/>
            <person name="Richter J."/>
            <person name="Russo S."/>
            <person name="Schroeder A.J."/>
            <person name="Shu S.Q."/>
            <person name="Stapleton M."/>
            <person name="Yamada C."/>
            <person name="Ashburner M."/>
            <person name="Gelbart W.M."/>
            <person name="Rubin G.M."/>
            <person name="Lewis S.E."/>
        </authorList>
    </citation>
    <scope>GENOME REANNOTATION</scope>
    <source>
        <strain>Berkeley</strain>
    </source>
</reference>
<reference key="3">
    <citation type="journal article" date="2002" name="Genome Biol.">
        <title>A Drosophila full-length cDNA resource.</title>
        <authorList>
            <person name="Stapleton M."/>
            <person name="Carlson J.W."/>
            <person name="Brokstein P."/>
            <person name="Yu C."/>
            <person name="Champe M."/>
            <person name="George R.A."/>
            <person name="Guarin H."/>
            <person name="Kronmiller B."/>
            <person name="Pacleb J.M."/>
            <person name="Park S."/>
            <person name="Wan K.H."/>
            <person name="Rubin G.M."/>
            <person name="Celniker S.E."/>
        </authorList>
    </citation>
    <scope>NUCLEOTIDE SEQUENCE [LARGE SCALE MRNA]</scope>
    <source>
        <strain>Berkeley</strain>
        <tissue>Embryo</tissue>
    </source>
</reference>
<keyword id="KW-0067">ATP-binding</keyword>
<keyword id="KW-1015">Disulfide bond</keyword>
<keyword id="KW-0496">Mitochondrion</keyword>
<keyword id="KW-0547">Nucleotide-binding</keyword>
<keyword id="KW-1185">Reference proteome</keyword>
<keyword id="KW-0694">RNA-binding</keyword>
<keyword id="KW-0808">Transferase</keyword>
<keyword id="KW-0819">tRNA processing</keyword>
<keyword id="KW-0820">tRNA-binding</keyword>
<name>MTU1_DROME</name>
<evidence type="ECO:0000250" key="1"/>
<evidence type="ECO:0000250" key="2">
    <source>
        <dbReference type="UniProtKB" id="Q12093"/>
    </source>
</evidence>
<evidence type="ECO:0000305" key="3"/>
<gene>
    <name type="ORF">CG3021</name>
</gene>